<name>Y436_PYRFU</name>
<protein>
    <recommendedName>
        <fullName>Kelch domain-containing protein PF0436</fullName>
    </recommendedName>
</protein>
<organism>
    <name type="scientific">Pyrococcus furiosus (strain ATCC 43587 / DSM 3638 / JCM 8422 / Vc1)</name>
    <dbReference type="NCBI Taxonomy" id="186497"/>
    <lineage>
        <taxon>Archaea</taxon>
        <taxon>Methanobacteriati</taxon>
        <taxon>Methanobacteriota</taxon>
        <taxon>Thermococci</taxon>
        <taxon>Thermococcales</taxon>
        <taxon>Thermococcaceae</taxon>
        <taxon>Pyrococcus</taxon>
    </lineage>
</organism>
<proteinExistence type="predicted"/>
<sequence>MKRGLFLTLFFLLILGIAGHWAWNSFGSKPNSMQVTNNIELIEIDHDVLIGLGNGFFVKVDNSTFMMSLKVLVKGEQVEHRVYRLKNGKSELVGKLDVPFVVDVPALWIDNEVLLFGGMNPGNITLVPVVYAYNPENGSMREFAEMPFRDYDQLSLLWDGSKAYLFVRFLNGNLSAYSFDPYAKKFQCLDLGFPEGFVFPGTSKYAAVWYKGKGYFVHGDRIAVFDPSSKNLVWAQVRLPDKYWARTAVATDRGIYIFGGFDDNVNFSRNIYLFVPENNTLTRVGTLPYPLGQAPGGWDGRRIYIVGGRGPGPNKYIVIFTPKG</sequence>
<gene>
    <name type="ordered locus">PF0436</name>
</gene>
<reference key="1">
    <citation type="journal article" date="1999" name="Genetics">
        <title>Divergence of the hyperthermophilic archaea Pyrococcus furiosus and P. horikoshii inferred from complete genomic sequences.</title>
        <authorList>
            <person name="Maeder D.L."/>
            <person name="Weiss R.B."/>
            <person name="Dunn D.M."/>
            <person name="Cherry J.L."/>
            <person name="Gonzalez J.M."/>
            <person name="DiRuggiero J."/>
            <person name="Robb F.T."/>
        </authorList>
    </citation>
    <scope>NUCLEOTIDE SEQUENCE [LARGE SCALE GENOMIC DNA]</scope>
    <source>
        <strain>ATCC 43587 / DSM 3638 / JCM 8422 / Vc1</strain>
    </source>
</reference>
<keyword id="KW-0880">Kelch repeat</keyword>
<keyword id="KW-1185">Reference proteome</keyword>
<keyword id="KW-0677">Repeat</keyword>
<accession>Q8U3M2</accession>
<feature type="chain" id="PRO_0000119173" description="Kelch domain-containing protein PF0436">
    <location>
        <begin position="1"/>
        <end position="324"/>
    </location>
</feature>
<feature type="repeat" description="Kelch 1">
    <location>
        <begin position="112"/>
        <end position="160"/>
    </location>
</feature>
<feature type="repeat" description="Kelch 2">
    <location>
        <begin position="254"/>
        <end position="301"/>
    </location>
</feature>
<feature type="repeat" description="Kelch 3">
    <location>
        <begin position="303"/>
        <end position="323"/>
    </location>
</feature>
<dbReference type="EMBL" id="AE009950">
    <property type="protein sequence ID" value="AAL80560.1"/>
    <property type="molecule type" value="Genomic_DNA"/>
</dbReference>
<dbReference type="RefSeq" id="WP_011011552.1">
    <property type="nucleotide sequence ID" value="NZ_CP023154.1"/>
</dbReference>
<dbReference type="SMR" id="Q8U3M2"/>
<dbReference type="PaxDb" id="186497-PF0436"/>
<dbReference type="KEGG" id="pfu:PF0436"/>
<dbReference type="PATRIC" id="fig|186497.12.peg.456"/>
<dbReference type="eggNOG" id="arCOG07536">
    <property type="taxonomic scope" value="Archaea"/>
</dbReference>
<dbReference type="HOGENOM" id="CLU_856909_0_0_2"/>
<dbReference type="OrthoDB" id="103428at2157"/>
<dbReference type="PhylomeDB" id="Q8U3M2"/>
<dbReference type="Proteomes" id="UP000001013">
    <property type="component" value="Chromosome"/>
</dbReference>
<dbReference type="Gene3D" id="2.120.10.80">
    <property type="entry name" value="Kelch-type beta propeller"/>
    <property type="match status" value="1"/>
</dbReference>
<dbReference type="InterPro" id="IPR015915">
    <property type="entry name" value="Kelch-typ_b-propeller"/>
</dbReference>
<dbReference type="InterPro" id="IPR006652">
    <property type="entry name" value="Kelch_1"/>
</dbReference>
<dbReference type="Pfam" id="PF01344">
    <property type="entry name" value="Kelch_1"/>
    <property type="match status" value="1"/>
</dbReference>
<dbReference type="SUPFAM" id="SSF117281">
    <property type="entry name" value="Kelch motif"/>
    <property type="match status" value="1"/>
</dbReference>